<protein>
    <recommendedName>
        <fullName>Putative NAD(P)H nitroreductase YdgI</fullName>
        <ecNumber>1.-.-.-</ecNumber>
    </recommendedName>
</protein>
<name>YDGI_BACSU</name>
<keyword id="KW-0285">Flavoprotein</keyword>
<keyword id="KW-0288">FMN</keyword>
<keyword id="KW-0520">NAD</keyword>
<keyword id="KW-0521">NADP</keyword>
<keyword id="KW-0560">Oxidoreductase</keyword>
<keyword id="KW-1185">Reference proteome</keyword>
<evidence type="ECO:0000250" key="1"/>
<evidence type="ECO:0000305" key="2"/>
<organism>
    <name type="scientific">Bacillus subtilis (strain 168)</name>
    <dbReference type="NCBI Taxonomy" id="224308"/>
    <lineage>
        <taxon>Bacteria</taxon>
        <taxon>Bacillati</taxon>
        <taxon>Bacillota</taxon>
        <taxon>Bacilli</taxon>
        <taxon>Bacillales</taxon>
        <taxon>Bacillaceae</taxon>
        <taxon>Bacillus</taxon>
    </lineage>
</organism>
<accession>P96707</accession>
<comment type="cofactor">
    <cofactor evidence="1">
        <name>FMN</name>
        <dbReference type="ChEBI" id="CHEBI:58210"/>
    </cofactor>
</comment>
<comment type="similarity">
    <text evidence="2">Belongs to the nitroreductase family.</text>
</comment>
<gene>
    <name type="primary">ydgI</name>
    <name type="ordered locus">BSU05660</name>
</gene>
<feature type="chain" id="PRO_0000072718" description="Putative NAD(P)H nitroreductase YdgI">
    <location>
        <begin position="1"/>
        <end position="209"/>
    </location>
</feature>
<feature type="binding site" evidence="1">
    <location>
        <begin position="14"/>
        <end position="16"/>
    </location>
    <ligand>
        <name>FMN</name>
        <dbReference type="ChEBI" id="CHEBI:58210"/>
    </ligand>
</feature>
<feature type="binding site" evidence="1">
    <location>
        <begin position="72"/>
        <end position="74"/>
    </location>
    <ligand>
        <name>FMN</name>
        <dbReference type="ChEBI" id="CHEBI:58210"/>
    </ligand>
</feature>
<feature type="binding site" evidence="1">
    <location>
        <begin position="161"/>
        <end position="162"/>
    </location>
    <ligand>
        <name>FMN</name>
        <dbReference type="ChEBI" id="CHEBI:58210"/>
    </ligand>
</feature>
<feature type="binding site" evidence="1">
    <location>
        <position position="199"/>
    </location>
    <ligand>
        <name>FMN</name>
        <dbReference type="ChEBI" id="CHEBI:58210"/>
    </ligand>
</feature>
<reference key="1">
    <citation type="submission" date="1997-03" db="EMBL/GenBank/DDBJ databases">
        <title>A 148 kbp sequence of the region between 35 and 47 degree of the Bacillus subtilis genome.</title>
        <authorList>
            <person name="Kasahara Y."/>
            <person name="Nakai S."/>
            <person name="Lee S."/>
            <person name="Sadaie Y."/>
            <person name="Ogasawara N."/>
        </authorList>
    </citation>
    <scope>NUCLEOTIDE SEQUENCE [GENOMIC DNA]</scope>
    <source>
        <strain>168</strain>
    </source>
</reference>
<reference key="2">
    <citation type="journal article" date="1997" name="Nature">
        <title>The complete genome sequence of the Gram-positive bacterium Bacillus subtilis.</title>
        <authorList>
            <person name="Kunst F."/>
            <person name="Ogasawara N."/>
            <person name="Moszer I."/>
            <person name="Albertini A.M."/>
            <person name="Alloni G."/>
            <person name="Azevedo V."/>
            <person name="Bertero M.G."/>
            <person name="Bessieres P."/>
            <person name="Bolotin A."/>
            <person name="Borchert S."/>
            <person name="Borriss R."/>
            <person name="Boursier L."/>
            <person name="Brans A."/>
            <person name="Braun M."/>
            <person name="Brignell S.C."/>
            <person name="Bron S."/>
            <person name="Brouillet S."/>
            <person name="Bruschi C.V."/>
            <person name="Caldwell B."/>
            <person name="Capuano V."/>
            <person name="Carter N.M."/>
            <person name="Choi S.-K."/>
            <person name="Codani J.-J."/>
            <person name="Connerton I.F."/>
            <person name="Cummings N.J."/>
            <person name="Daniel R.A."/>
            <person name="Denizot F."/>
            <person name="Devine K.M."/>
            <person name="Duesterhoeft A."/>
            <person name="Ehrlich S.D."/>
            <person name="Emmerson P.T."/>
            <person name="Entian K.-D."/>
            <person name="Errington J."/>
            <person name="Fabret C."/>
            <person name="Ferrari E."/>
            <person name="Foulger D."/>
            <person name="Fritz C."/>
            <person name="Fujita M."/>
            <person name="Fujita Y."/>
            <person name="Fuma S."/>
            <person name="Galizzi A."/>
            <person name="Galleron N."/>
            <person name="Ghim S.-Y."/>
            <person name="Glaser P."/>
            <person name="Goffeau A."/>
            <person name="Golightly E.J."/>
            <person name="Grandi G."/>
            <person name="Guiseppi G."/>
            <person name="Guy B.J."/>
            <person name="Haga K."/>
            <person name="Haiech J."/>
            <person name="Harwood C.R."/>
            <person name="Henaut A."/>
            <person name="Hilbert H."/>
            <person name="Holsappel S."/>
            <person name="Hosono S."/>
            <person name="Hullo M.-F."/>
            <person name="Itaya M."/>
            <person name="Jones L.-M."/>
            <person name="Joris B."/>
            <person name="Karamata D."/>
            <person name="Kasahara Y."/>
            <person name="Klaerr-Blanchard M."/>
            <person name="Klein C."/>
            <person name="Kobayashi Y."/>
            <person name="Koetter P."/>
            <person name="Koningstein G."/>
            <person name="Krogh S."/>
            <person name="Kumano M."/>
            <person name="Kurita K."/>
            <person name="Lapidus A."/>
            <person name="Lardinois S."/>
            <person name="Lauber J."/>
            <person name="Lazarevic V."/>
            <person name="Lee S.-M."/>
            <person name="Levine A."/>
            <person name="Liu H."/>
            <person name="Masuda S."/>
            <person name="Mauel C."/>
            <person name="Medigue C."/>
            <person name="Medina N."/>
            <person name="Mellado R.P."/>
            <person name="Mizuno M."/>
            <person name="Moestl D."/>
            <person name="Nakai S."/>
            <person name="Noback M."/>
            <person name="Noone D."/>
            <person name="O'Reilly M."/>
            <person name="Ogawa K."/>
            <person name="Ogiwara A."/>
            <person name="Oudega B."/>
            <person name="Park S.-H."/>
            <person name="Parro V."/>
            <person name="Pohl T.M."/>
            <person name="Portetelle D."/>
            <person name="Porwollik S."/>
            <person name="Prescott A.M."/>
            <person name="Presecan E."/>
            <person name="Pujic P."/>
            <person name="Purnelle B."/>
            <person name="Rapoport G."/>
            <person name="Rey M."/>
            <person name="Reynolds S."/>
            <person name="Rieger M."/>
            <person name="Rivolta C."/>
            <person name="Rocha E."/>
            <person name="Roche B."/>
            <person name="Rose M."/>
            <person name="Sadaie Y."/>
            <person name="Sato T."/>
            <person name="Scanlan E."/>
            <person name="Schleich S."/>
            <person name="Schroeter R."/>
            <person name="Scoffone F."/>
            <person name="Sekiguchi J."/>
            <person name="Sekowska A."/>
            <person name="Seror S.J."/>
            <person name="Serror P."/>
            <person name="Shin B.-S."/>
            <person name="Soldo B."/>
            <person name="Sorokin A."/>
            <person name="Tacconi E."/>
            <person name="Takagi T."/>
            <person name="Takahashi H."/>
            <person name="Takemaru K."/>
            <person name="Takeuchi M."/>
            <person name="Tamakoshi A."/>
            <person name="Tanaka T."/>
            <person name="Terpstra P."/>
            <person name="Tognoni A."/>
            <person name="Tosato V."/>
            <person name="Uchiyama S."/>
            <person name="Vandenbol M."/>
            <person name="Vannier F."/>
            <person name="Vassarotti A."/>
            <person name="Viari A."/>
            <person name="Wambutt R."/>
            <person name="Wedler E."/>
            <person name="Wedler H."/>
            <person name="Weitzenegger T."/>
            <person name="Winters P."/>
            <person name="Wipat A."/>
            <person name="Yamamoto H."/>
            <person name="Yamane K."/>
            <person name="Yasumoto K."/>
            <person name="Yata K."/>
            <person name="Yoshida K."/>
            <person name="Yoshikawa H.-F."/>
            <person name="Zumstein E."/>
            <person name="Yoshikawa H."/>
            <person name="Danchin A."/>
        </authorList>
    </citation>
    <scope>NUCLEOTIDE SEQUENCE [LARGE SCALE GENOMIC DNA]</scope>
    <source>
        <strain>168</strain>
    </source>
</reference>
<sequence>MIKTNDFMEIMKGRRSIRNYDPAVKISKEEMTEILEEATTAPSSVNAQPWRFLVIDSPEGKEKLAPLASFNQTQVTTSSAVIAVFADMNNADYLEEIYSKAVELGYMPQEVKDRQIAALTAHFEKLPAQVNRETILIDGGLVSMQLMLTARAHGYDTNPIGGYDKENIAETFGLDKERYVPVMLLSIGKAADEGYASYRLPIDTIAEWK</sequence>
<proteinExistence type="inferred from homology"/>
<dbReference type="EC" id="1.-.-.-"/>
<dbReference type="EMBL" id="AB001488">
    <property type="protein sequence ID" value="BAA19399.1"/>
    <property type="molecule type" value="Genomic_DNA"/>
</dbReference>
<dbReference type="EMBL" id="AL009126">
    <property type="protein sequence ID" value="CAB12385.1"/>
    <property type="molecule type" value="Genomic_DNA"/>
</dbReference>
<dbReference type="PIR" id="C69783">
    <property type="entry name" value="C69783"/>
</dbReference>
<dbReference type="RefSeq" id="NP_388447.1">
    <property type="nucleotide sequence ID" value="NC_000964.3"/>
</dbReference>
<dbReference type="RefSeq" id="WP_003234135.1">
    <property type="nucleotide sequence ID" value="NZ_OZ025638.1"/>
</dbReference>
<dbReference type="SMR" id="P96707"/>
<dbReference type="FunCoup" id="P96707">
    <property type="interactions" value="265"/>
</dbReference>
<dbReference type="STRING" id="224308.BSU05660"/>
<dbReference type="PaxDb" id="224308-BSU05660"/>
<dbReference type="EnsemblBacteria" id="CAB12385">
    <property type="protein sequence ID" value="CAB12385"/>
    <property type="gene ID" value="BSU_05660"/>
</dbReference>
<dbReference type="GeneID" id="938001"/>
<dbReference type="KEGG" id="bsu:BSU05660"/>
<dbReference type="PATRIC" id="fig|224308.179.peg.609"/>
<dbReference type="eggNOG" id="COG0778">
    <property type="taxonomic scope" value="Bacteria"/>
</dbReference>
<dbReference type="InParanoid" id="P96707"/>
<dbReference type="OrthoDB" id="9782629at2"/>
<dbReference type="PhylomeDB" id="P96707"/>
<dbReference type="BioCyc" id="BSUB:BSU05660-MONOMER"/>
<dbReference type="Proteomes" id="UP000001570">
    <property type="component" value="Chromosome"/>
</dbReference>
<dbReference type="GO" id="GO:0016491">
    <property type="term" value="F:oxidoreductase activity"/>
    <property type="evidence" value="ECO:0007669"/>
    <property type="project" value="UniProtKB-KW"/>
</dbReference>
<dbReference type="CDD" id="cd02137">
    <property type="entry name" value="MhqN-like"/>
    <property type="match status" value="1"/>
</dbReference>
<dbReference type="Gene3D" id="3.40.109.10">
    <property type="entry name" value="NADH Oxidase"/>
    <property type="match status" value="1"/>
</dbReference>
<dbReference type="InterPro" id="IPR029479">
    <property type="entry name" value="Nitroreductase"/>
</dbReference>
<dbReference type="InterPro" id="IPR000415">
    <property type="entry name" value="Nitroreductase-like"/>
</dbReference>
<dbReference type="PANTHER" id="PTHR43673">
    <property type="entry name" value="NAD(P)H NITROREDUCTASE YDGI-RELATED"/>
    <property type="match status" value="1"/>
</dbReference>
<dbReference type="PANTHER" id="PTHR43673:SF10">
    <property type="entry name" value="NADH DEHYDROGENASE_NAD(P)H NITROREDUCTASE XCC3605-RELATED"/>
    <property type="match status" value="1"/>
</dbReference>
<dbReference type="Pfam" id="PF00881">
    <property type="entry name" value="Nitroreductase"/>
    <property type="match status" value="1"/>
</dbReference>
<dbReference type="SUPFAM" id="SSF55469">
    <property type="entry name" value="FMN-dependent nitroreductase-like"/>
    <property type="match status" value="1"/>
</dbReference>